<name>HSLO_STRPM</name>
<proteinExistence type="inferred from homology"/>
<reference key="1">
    <citation type="journal article" date="2005" name="J. Infect. Dis.">
        <title>Genome sequence of a serotype M28 strain of group A Streptococcus: potential new insights into puerperal sepsis and bacterial disease specificity.</title>
        <authorList>
            <person name="Green N.M."/>
            <person name="Zhang S."/>
            <person name="Porcella S.F."/>
            <person name="Nagiec M.J."/>
            <person name="Barbian K.D."/>
            <person name="Beres S.B."/>
            <person name="Lefebvre R.B."/>
            <person name="Musser J.M."/>
        </authorList>
    </citation>
    <scope>NUCLEOTIDE SEQUENCE [LARGE SCALE GENOMIC DNA]</scope>
    <source>
        <strain>MGAS6180</strain>
    </source>
</reference>
<protein>
    <recommendedName>
        <fullName evidence="1">33 kDa chaperonin</fullName>
    </recommendedName>
    <alternativeName>
        <fullName evidence="1">Heat shock protein 33 homolog</fullName>
        <shortName evidence="1">HSP33</shortName>
    </alternativeName>
</protein>
<accession>Q48VN9</accession>
<feature type="chain" id="PRO_0000238098" description="33 kDa chaperonin">
    <location>
        <begin position="1"/>
        <end position="290"/>
    </location>
</feature>
<feature type="disulfide bond" description="Redox-active" evidence="1">
    <location>
        <begin position="235"/>
        <end position="237"/>
    </location>
</feature>
<feature type="disulfide bond" description="Redox-active" evidence="1">
    <location>
        <begin position="268"/>
        <end position="271"/>
    </location>
</feature>
<evidence type="ECO:0000255" key="1">
    <source>
        <dbReference type="HAMAP-Rule" id="MF_00117"/>
    </source>
</evidence>
<dbReference type="EMBL" id="CP000056">
    <property type="protein sequence ID" value="AAX71217.1"/>
    <property type="molecule type" value="Genomic_DNA"/>
</dbReference>
<dbReference type="RefSeq" id="WP_011284432.1">
    <property type="nucleotide sequence ID" value="NC_007296.2"/>
</dbReference>
<dbReference type="SMR" id="Q48VN9"/>
<dbReference type="KEGG" id="spb:M28_Spy0103"/>
<dbReference type="HOGENOM" id="CLU_054493_1_0_9"/>
<dbReference type="GO" id="GO:0005737">
    <property type="term" value="C:cytoplasm"/>
    <property type="evidence" value="ECO:0007669"/>
    <property type="project" value="UniProtKB-SubCell"/>
</dbReference>
<dbReference type="GO" id="GO:0044183">
    <property type="term" value="F:protein folding chaperone"/>
    <property type="evidence" value="ECO:0007669"/>
    <property type="project" value="TreeGrafter"/>
</dbReference>
<dbReference type="GO" id="GO:0051082">
    <property type="term" value="F:unfolded protein binding"/>
    <property type="evidence" value="ECO:0007669"/>
    <property type="project" value="UniProtKB-UniRule"/>
</dbReference>
<dbReference type="GO" id="GO:0042026">
    <property type="term" value="P:protein refolding"/>
    <property type="evidence" value="ECO:0007669"/>
    <property type="project" value="TreeGrafter"/>
</dbReference>
<dbReference type="CDD" id="cd00498">
    <property type="entry name" value="Hsp33"/>
    <property type="match status" value="1"/>
</dbReference>
<dbReference type="Gene3D" id="3.55.30.10">
    <property type="entry name" value="Hsp33 domain"/>
    <property type="match status" value="1"/>
</dbReference>
<dbReference type="Gene3D" id="3.90.1280.10">
    <property type="entry name" value="HSP33 redox switch-like"/>
    <property type="match status" value="1"/>
</dbReference>
<dbReference type="HAMAP" id="MF_00117">
    <property type="entry name" value="HslO"/>
    <property type="match status" value="1"/>
</dbReference>
<dbReference type="InterPro" id="IPR000397">
    <property type="entry name" value="Heat_shock_Hsp33"/>
</dbReference>
<dbReference type="InterPro" id="IPR016154">
    <property type="entry name" value="Heat_shock_Hsp33_C"/>
</dbReference>
<dbReference type="InterPro" id="IPR016153">
    <property type="entry name" value="Heat_shock_Hsp33_N"/>
</dbReference>
<dbReference type="NCBIfam" id="NF001033">
    <property type="entry name" value="PRK00114.1"/>
    <property type="match status" value="1"/>
</dbReference>
<dbReference type="PANTHER" id="PTHR30111">
    <property type="entry name" value="33 KDA CHAPERONIN"/>
    <property type="match status" value="1"/>
</dbReference>
<dbReference type="PANTHER" id="PTHR30111:SF1">
    <property type="entry name" value="33 KDA CHAPERONIN"/>
    <property type="match status" value="1"/>
</dbReference>
<dbReference type="Pfam" id="PF01430">
    <property type="entry name" value="HSP33"/>
    <property type="match status" value="1"/>
</dbReference>
<dbReference type="PIRSF" id="PIRSF005261">
    <property type="entry name" value="Heat_shock_Hsp33"/>
    <property type="match status" value="1"/>
</dbReference>
<dbReference type="SUPFAM" id="SSF64397">
    <property type="entry name" value="Hsp33 domain"/>
    <property type="match status" value="1"/>
</dbReference>
<dbReference type="SUPFAM" id="SSF118352">
    <property type="entry name" value="HSP33 redox switch-like"/>
    <property type="match status" value="1"/>
</dbReference>
<comment type="function">
    <text evidence="1">Redox regulated molecular chaperone. Protects both thermally unfolding and oxidatively damaged proteins from irreversible aggregation. Plays an important role in the bacterial defense system toward oxidative stress.</text>
</comment>
<comment type="subcellular location">
    <subcellularLocation>
        <location evidence="1">Cytoplasm</location>
    </subcellularLocation>
</comment>
<comment type="PTM">
    <text evidence="1">Under oxidizing conditions two disulfide bonds are formed involving the reactive cysteines. Under reducing conditions zinc is bound to the reactive cysteines and the protein is inactive.</text>
</comment>
<comment type="similarity">
    <text evidence="1">Belongs to the HSP33 family.</text>
</comment>
<organism>
    <name type="scientific">Streptococcus pyogenes serotype M28 (strain MGAS6180)</name>
    <dbReference type="NCBI Taxonomy" id="319701"/>
    <lineage>
        <taxon>Bacteria</taxon>
        <taxon>Bacillati</taxon>
        <taxon>Bacillota</taxon>
        <taxon>Bacilli</taxon>
        <taxon>Lactobacillales</taxon>
        <taxon>Streptococcaceae</taxon>
        <taxon>Streptococcus</taxon>
    </lineage>
</organism>
<gene>
    <name evidence="1" type="primary">hslO</name>
    <name type="ordered locus">M28_Spy0103</name>
</gene>
<sequence length="290" mass="31506">MDKIIKSIAQSGAFRAYVLDSTETVALAQEKHNTLSSSTVALGRTLIANQILAANQKGDSKITVKVIGDSSFGHIISVADTKGHVKGYIQNTGVDIKKTATGEVLVGPFMGNGHFVTIIDYGTGNPYTSTTPLITGEIGEDFAYYLTESEQTPSAIGLNVLLDENDKVKVAGGFMVQVLPGASEEEIARYEKRLQEMPAISHLLASKNHVDALLEAIYGDEPYKRLSEEPLSFQCDCSRERFEAALMTLPKADLQAMIDEDKGAEIVCQFCGTKYQFNENDLEALINDKA</sequence>
<keyword id="KW-0143">Chaperone</keyword>
<keyword id="KW-0963">Cytoplasm</keyword>
<keyword id="KW-1015">Disulfide bond</keyword>
<keyword id="KW-0676">Redox-active center</keyword>
<keyword id="KW-0862">Zinc</keyword>